<reference key="1">
    <citation type="journal article" date="2011" name="Stand. Genomic Sci.">
        <title>Complete genome sequence of the filamentous gliding predatory bacterium Herpetosiphon aurantiacus type strain (114-95(T)).</title>
        <authorList>
            <person name="Kiss H."/>
            <person name="Nett M."/>
            <person name="Domin N."/>
            <person name="Martin K."/>
            <person name="Maresca J.A."/>
            <person name="Copeland A."/>
            <person name="Lapidus A."/>
            <person name="Lucas S."/>
            <person name="Berry K.W."/>
            <person name="Glavina Del Rio T."/>
            <person name="Dalin E."/>
            <person name="Tice H."/>
            <person name="Pitluck S."/>
            <person name="Richardson P."/>
            <person name="Bruce D."/>
            <person name="Goodwin L."/>
            <person name="Han C."/>
            <person name="Detter J.C."/>
            <person name="Schmutz J."/>
            <person name="Brettin T."/>
            <person name="Land M."/>
            <person name="Hauser L."/>
            <person name="Kyrpides N.C."/>
            <person name="Ivanova N."/>
            <person name="Goeker M."/>
            <person name="Woyke T."/>
            <person name="Klenk H.P."/>
            <person name="Bryant D.A."/>
        </authorList>
    </citation>
    <scope>NUCLEOTIDE SEQUENCE [LARGE SCALE GENOMIC DNA]</scope>
    <source>
        <strain>ATCC 23779 / DSM 785 / 114-95</strain>
    </source>
</reference>
<name>HIS4_HERA2</name>
<gene>
    <name evidence="1" type="primary">hisA</name>
    <name type="ordered locus">Haur_0156</name>
</gene>
<proteinExistence type="inferred from homology"/>
<feature type="chain" id="PRO_1000135124" description="1-(5-phosphoribosyl)-5-[(5-phosphoribosylamino)methylideneamino] imidazole-4-carboxamide isomerase">
    <location>
        <begin position="1"/>
        <end position="240"/>
    </location>
</feature>
<feature type="active site" description="Proton acceptor" evidence="1">
    <location>
        <position position="8"/>
    </location>
</feature>
<feature type="active site" description="Proton donor" evidence="1">
    <location>
        <position position="129"/>
    </location>
</feature>
<accession>A9B5I3</accession>
<dbReference type="EC" id="5.3.1.16" evidence="1"/>
<dbReference type="EMBL" id="CP000875">
    <property type="protein sequence ID" value="ABX02808.1"/>
    <property type="molecule type" value="Genomic_DNA"/>
</dbReference>
<dbReference type="SMR" id="A9B5I3"/>
<dbReference type="FunCoup" id="A9B5I3">
    <property type="interactions" value="347"/>
</dbReference>
<dbReference type="STRING" id="316274.Haur_0156"/>
<dbReference type="KEGG" id="hau:Haur_0156"/>
<dbReference type="eggNOG" id="COG0106">
    <property type="taxonomic scope" value="Bacteria"/>
</dbReference>
<dbReference type="HOGENOM" id="CLU_048577_1_1_0"/>
<dbReference type="InParanoid" id="A9B5I3"/>
<dbReference type="UniPathway" id="UPA00031">
    <property type="reaction ID" value="UER00009"/>
</dbReference>
<dbReference type="Proteomes" id="UP000000787">
    <property type="component" value="Chromosome"/>
</dbReference>
<dbReference type="GO" id="GO:0005737">
    <property type="term" value="C:cytoplasm"/>
    <property type="evidence" value="ECO:0007669"/>
    <property type="project" value="UniProtKB-SubCell"/>
</dbReference>
<dbReference type="GO" id="GO:0003949">
    <property type="term" value="F:1-(5-phosphoribosyl)-5-[(5-phosphoribosylamino)methylideneamino]imidazole-4-carboxamide isomerase activity"/>
    <property type="evidence" value="ECO:0007669"/>
    <property type="project" value="UniProtKB-UniRule"/>
</dbReference>
<dbReference type="GO" id="GO:0000105">
    <property type="term" value="P:L-histidine biosynthetic process"/>
    <property type="evidence" value="ECO:0007669"/>
    <property type="project" value="UniProtKB-UniRule"/>
</dbReference>
<dbReference type="GO" id="GO:0000162">
    <property type="term" value="P:L-tryptophan biosynthetic process"/>
    <property type="evidence" value="ECO:0007669"/>
    <property type="project" value="TreeGrafter"/>
</dbReference>
<dbReference type="CDD" id="cd04732">
    <property type="entry name" value="HisA"/>
    <property type="match status" value="1"/>
</dbReference>
<dbReference type="FunFam" id="3.20.20.70:FF:000009">
    <property type="entry name" value="1-(5-phosphoribosyl)-5-[(5-phosphoribosylamino)methylideneamino] imidazole-4-carboxamide isomerase"/>
    <property type="match status" value="1"/>
</dbReference>
<dbReference type="Gene3D" id="3.20.20.70">
    <property type="entry name" value="Aldolase class I"/>
    <property type="match status" value="1"/>
</dbReference>
<dbReference type="HAMAP" id="MF_01014">
    <property type="entry name" value="HisA"/>
    <property type="match status" value="1"/>
</dbReference>
<dbReference type="InterPro" id="IPR013785">
    <property type="entry name" value="Aldolase_TIM"/>
</dbReference>
<dbReference type="InterPro" id="IPR006062">
    <property type="entry name" value="His_biosynth"/>
</dbReference>
<dbReference type="InterPro" id="IPR006063">
    <property type="entry name" value="HisA_bact_arch"/>
</dbReference>
<dbReference type="InterPro" id="IPR044524">
    <property type="entry name" value="Isoase_HisA-like"/>
</dbReference>
<dbReference type="InterPro" id="IPR023016">
    <property type="entry name" value="Isoase_HisA-like_bact"/>
</dbReference>
<dbReference type="InterPro" id="IPR011060">
    <property type="entry name" value="RibuloseP-bd_barrel"/>
</dbReference>
<dbReference type="NCBIfam" id="TIGR00007">
    <property type="entry name" value="1-(5-phosphoribosyl)-5-[(5-phosphoribosylamino)methylideneamino]imidazole-4-carboxamide isomerase"/>
    <property type="match status" value="1"/>
</dbReference>
<dbReference type="PANTHER" id="PTHR43090">
    <property type="entry name" value="1-(5-PHOSPHORIBOSYL)-5-[(5-PHOSPHORIBOSYLAMINO)METHYLIDENEAMINO] IMIDAZOLE-4-CARBOXAMIDE ISOMERASE"/>
    <property type="match status" value="1"/>
</dbReference>
<dbReference type="PANTHER" id="PTHR43090:SF2">
    <property type="entry name" value="1-(5-PHOSPHORIBOSYL)-5-[(5-PHOSPHORIBOSYLAMINO)METHYLIDENEAMINO] IMIDAZOLE-4-CARBOXAMIDE ISOMERASE"/>
    <property type="match status" value="1"/>
</dbReference>
<dbReference type="Pfam" id="PF00977">
    <property type="entry name" value="His_biosynth"/>
    <property type="match status" value="1"/>
</dbReference>
<dbReference type="SUPFAM" id="SSF51366">
    <property type="entry name" value="Ribulose-phoshate binding barrel"/>
    <property type="match status" value="1"/>
</dbReference>
<keyword id="KW-0028">Amino-acid biosynthesis</keyword>
<keyword id="KW-0963">Cytoplasm</keyword>
<keyword id="KW-0368">Histidine biosynthesis</keyword>
<keyword id="KW-0413">Isomerase</keyword>
<organism>
    <name type="scientific">Herpetosiphon aurantiacus (strain ATCC 23779 / DSM 785 / 114-95)</name>
    <dbReference type="NCBI Taxonomy" id="316274"/>
    <lineage>
        <taxon>Bacteria</taxon>
        <taxon>Bacillati</taxon>
        <taxon>Chloroflexota</taxon>
        <taxon>Chloroflexia</taxon>
        <taxon>Herpetosiphonales</taxon>
        <taxon>Herpetosiphonaceae</taxon>
        <taxon>Herpetosiphon</taxon>
    </lineage>
</organism>
<sequence>MQLIPAIDLRDGRCVRLVQGDFEQTTVYGDDPVAVAQQWEAAGAARIHIVDLDGAKAGRPTQTSTIAAITKAVSVPVQLGGGLRDAASIAAAFELGVSDVILGTVAVRNPELVAELVRQYGKAITIGIDARNGVVATEGWLASSRQRATELAEQMGQLGVARIIYTDISRDGTLSEPNYAQTAALVTPNGPAIIASGGIARVEHLARLAELGISGAIIGTALYTGHIDLASAIQTIEHGG</sequence>
<comment type="catalytic activity">
    <reaction evidence="1">
        <text>1-(5-phospho-beta-D-ribosyl)-5-[(5-phospho-beta-D-ribosylamino)methylideneamino]imidazole-4-carboxamide = 5-[(5-phospho-1-deoxy-D-ribulos-1-ylimino)methylamino]-1-(5-phospho-beta-D-ribosyl)imidazole-4-carboxamide</text>
        <dbReference type="Rhea" id="RHEA:15469"/>
        <dbReference type="ChEBI" id="CHEBI:58435"/>
        <dbReference type="ChEBI" id="CHEBI:58525"/>
        <dbReference type="EC" id="5.3.1.16"/>
    </reaction>
</comment>
<comment type="pathway">
    <text evidence="1">Amino-acid biosynthesis; L-histidine biosynthesis; L-histidine from 5-phospho-alpha-D-ribose 1-diphosphate: step 4/9.</text>
</comment>
<comment type="subcellular location">
    <subcellularLocation>
        <location evidence="1">Cytoplasm</location>
    </subcellularLocation>
</comment>
<comment type="similarity">
    <text evidence="1">Belongs to the HisA/HisF family.</text>
</comment>
<protein>
    <recommendedName>
        <fullName evidence="1">1-(5-phosphoribosyl)-5-[(5-phosphoribosylamino)methylideneamino] imidazole-4-carboxamide isomerase</fullName>
        <ecNumber evidence="1">5.3.1.16</ecNumber>
    </recommendedName>
    <alternativeName>
        <fullName evidence="1">Phosphoribosylformimino-5-aminoimidazole carboxamide ribotide isomerase</fullName>
    </alternativeName>
</protein>
<evidence type="ECO:0000255" key="1">
    <source>
        <dbReference type="HAMAP-Rule" id="MF_01014"/>
    </source>
</evidence>